<name>RL28_PAEAT</name>
<gene>
    <name evidence="1" type="primary">rpmB</name>
    <name type="ordered locus">AAur_3756</name>
</gene>
<protein>
    <recommendedName>
        <fullName evidence="1">Large ribosomal subunit protein bL28</fullName>
    </recommendedName>
    <alternativeName>
        <fullName evidence="3">50S ribosomal protein L28</fullName>
    </alternativeName>
</protein>
<accession>A1RB24</accession>
<proteinExistence type="inferred from homology"/>
<evidence type="ECO:0000255" key="1">
    <source>
        <dbReference type="HAMAP-Rule" id="MF_00373"/>
    </source>
</evidence>
<evidence type="ECO:0000256" key="2">
    <source>
        <dbReference type="SAM" id="MobiDB-lite"/>
    </source>
</evidence>
<evidence type="ECO:0000305" key="3"/>
<reference key="1">
    <citation type="journal article" date="2006" name="PLoS Genet.">
        <title>Secrets of soil survival revealed by the genome sequence of Arthrobacter aurescens TC1.</title>
        <authorList>
            <person name="Mongodin E.F."/>
            <person name="Shapir N."/>
            <person name="Daugherty S.C."/>
            <person name="DeBoy R.T."/>
            <person name="Emerson J.B."/>
            <person name="Shvartzbeyn A."/>
            <person name="Radune D."/>
            <person name="Vamathevan J."/>
            <person name="Riggs F."/>
            <person name="Grinberg V."/>
            <person name="Khouri H.M."/>
            <person name="Wackett L.P."/>
            <person name="Nelson K.E."/>
            <person name="Sadowsky M.J."/>
        </authorList>
    </citation>
    <scope>NUCLEOTIDE SEQUENCE [LARGE SCALE GENOMIC DNA]</scope>
    <source>
        <strain>TC1</strain>
    </source>
</reference>
<feature type="chain" id="PRO_1000007166" description="Large ribosomal subunit protein bL28">
    <location>
        <begin position="1"/>
        <end position="78"/>
    </location>
</feature>
<feature type="region of interest" description="Disordered" evidence="2">
    <location>
        <begin position="1"/>
        <end position="31"/>
    </location>
</feature>
<dbReference type="EMBL" id="CP000474">
    <property type="protein sequence ID" value="ABM09926.1"/>
    <property type="molecule type" value="Genomic_DNA"/>
</dbReference>
<dbReference type="RefSeq" id="WP_011776361.1">
    <property type="nucleotide sequence ID" value="NC_008711.1"/>
</dbReference>
<dbReference type="SMR" id="A1RB24"/>
<dbReference type="STRING" id="290340.AAur_3756"/>
<dbReference type="GeneID" id="97302624"/>
<dbReference type="KEGG" id="aau:AAur_3756"/>
<dbReference type="eggNOG" id="COG0227">
    <property type="taxonomic scope" value="Bacteria"/>
</dbReference>
<dbReference type="HOGENOM" id="CLU_064548_3_1_11"/>
<dbReference type="OrthoDB" id="9805609at2"/>
<dbReference type="Proteomes" id="UP000000637">
    <property type="component" value="Chromosome"/>
</dbReference>
<dbReference type="GO" id="GO:1990904">
    <property type="term" value="C:ribonucleoprotein complex"/>
    <property type="evidence" value="ECO:0007669"/>
    <property type="project" value="UniProtKB-KW"/>
</dbReference>
<dbReference type="GO" id="GO:0005840">
    <property type="term" value="C:ribosome"/>
    <property type="evidence" value="ECO:0007669"/>
    <property type="project" value="UniProtKB-KW"/>
</dbReference>
<dbReference type="GO" id="GO:0003735">
    <property type="term" value="F:structural constituent of ribosome"/>
    <property type="evidence" value="ECO:0007669"/>
    <property type="project" value="InterPro"/>
</dbReference>
<dbReference type="GO" id="GO:0006412">
    <property type="term" value="P:translation"/>
    <property type="evidence" value="ECO:0007669"/>
    <property type="project" value="UniProtKB-UniRule"/>
</dbReference>
<dbReference type="FunFam" id="2.30.170.40:FF:000001">
    <property type="entry name" value="50S ribosomal protein L28"/>
    <property type="match status" value="1"/>
</dbReference>
<dbReference type="Gene3D" id="2.30.170.40">
    <property type="entry name" value="Ribosomal protein L28/L24"/>
    <property type="match status" value="1"/>
</dbReference>
<dbReference type="HAMAP" id="MF_00373">
    <property type="entry name" value="Ribosomal_bL28"/>
    <property type="match status" value="1"/>
</dbReference>
<dbReference type="InterPro" id="IPR026569">
    <property type="entry name" value="Ribosomal_bL28"/>
</dbReference>
<dbReference type="InterPro" id="IPR034704">
    <property type="entry name" value="Ribosomal_bL28/bL31-like_sf"/>
</dbReference>
<dbReference type="InterPro" id="IPR001383">
    <property type="entry name" value="Ribosomal_bL28_bact-type"/>
</dbReference>
<dbReference type="InterPro" id="IPR037147">
    <property type="entry name" value="Ribosomal_bL28_sf"/>
</dbReference>
<dbReference type="NCBIfam" id="TIGR00009">
    <property type="entry name" value="L28"/>
    <property type="match status" value="1"/>
</dbReference>
<dbReference type="PANTHER" id="PTHR13528">
    <property type="entry name" value="39S RIBOSOMAL PROTEIN L28, MITOCHONDRIAL"/>
    <property type="match status" value="1"/>
</dbReference>
<dbReference type="PANTHER" id="PTHR13528:SF2">
    <property type="entry name" value="LARGE RIBOSOMAL SUBUNIT PROTEIN BL28M"/>
    <property type="match status" value="1"/>
</dbReference>
<dbReference type="Pfam" id="PF00830">
    <property type="entry name" value="Ribosomal_L28"/>
    <property type="match status" value="1"/>
</dbReference>
<dbReference type="SUPFAM" id="SSF143800">
    <property type="entry name" value="L28p-like"/>
    <property type="match status" value="1"/>
</dbReference>
<keyword id="KW-0687">Ribonucleoprotein</keyword>
<keyword id="KW-0689">Ribosomal protein</keyword>
<comment type="similarity">
    <text evidence="1">Belongs to the bacterial ribosomal protein bL28 family.</text>
</comment>
<organism>
    <name type="scientific">Paenarthrobacter aurescens (strain TC1)</name>
    <dbReference type="NCBI Taxonomy" id="290340"/>
    <lineage>
        <taxon>Bacteria</taxon>
        <taxon>Bacillati</taxon>
        <taxon>Actinomycetota</taxon>
        <taxon>Actinomycetes</taxon>
        <taxon>Micrococcales</taxon>
        <taxon>Micrococcaceae</taxon>
        <taxon>Paenarthrobacter</taxon>
    </lineage>
</organism>
<sequence>MAAHCQVTGAEPGFGHSISHSHRRNKRRFDPNIQKKRYWVPSLRRNVTLTLSARGIKTIDVRGIDSVVADILARGVKL</sequence>